<sequence length="134" mass="14238">MSDIPSDLHYTAEHEWIRRSGDDTVRVGITDYAQSALGDVVFVQLPVIGTAVTAGETFGEVESTKSVSDLYAPISGKVSEVNSDLDGTPQLVNSDPYGAGWLLDIQVDSSDVAALESALTTLLDAEAYRGTLTE</sequence>
<comment type="function">
    <text evidence="1">The glycine cleavage system catalyzes the degradation of glycine. The H protein shuttles the methylamine group of glycine from the P protein to the T protein.</text>
</comment>
<comment type="cofactor">
    <cofactor evidence="1">
        <name>(R)-lipoate</name>
        <dbReference type="ChEBI" id="CHEBI:83088"/>
    </cofactor>
    <text evidence="1">Binds 1 lipoyl cofactor covalently.</text>
</comment>
<comment type="subunit">
    <text evidence="1">The glycine cleavage system is composed of four proteins: P, T, L and H.</text>
</comment>
<comment type="similarity">
    <text evidence="1">Belongs to the GcvH family.</text>
</comment>
<organism>
    <name type="scientific">Mycobacterium tuberculosis (strain ATCC 25177 / H37Ra)</name>
    <dbReference type="NCBI Taxonomy" id="419947"/>
    <lineage>
        <taxon>Bacteria</taxon>
        <taxon>Bacillati</taxon>
        <taxon>Actinomycetota</taxon>
        <taxon>Actinomycetes</taxon>
        <taxon>Mycobacteriales</taxon>
        <taxon>Mycobacteriaceae</taxon>
        <taxon>Mycobacterium</taxon>
        <taxon>Mycobacterium tuberculosis complex</taxon>
    </lineage>
</organism>
<reference key="1">
    <citation type="journal article" date="2008" name="PLoS ONE">
        <title>Genetic basis of virulence attenuation revealed by comparative genomic analysis of Mycobacterium tuberculosis strain H37Ra versus H37Rv.</title>
        <authorList>
            <person name="Zheng H."/>
            <person name="Lu L."/>
            <person name="Wang B."/>
            <person name="Pu S."/>
            <person name="Zhang X."/>
            <person name="Zhu G."/>
            <person name="Shi W."/>
            <person name="Zhang L."/>
            <person name="Wang H."/>
            <person name="Wang S."/>
            <person name="Zhao G."/>
            <person name="Zhang Y."/>
        </authorList>
    </citation>
    <scope>NUCLEOTIDE SEQUENCE [LARGE SCALE GENOMIC DNA]</scope>
    <source>
        <strain>ATCC 25177 / H37Ra</strain>
    </source>
</reference>
<protein>
    <recommendedName>
        <fullName evidence="1">Glycine cleavage system H protein</fullName>
    </recommendedName>
</protein>
<name>GCSH_MYCTA</name>
<feature type="chain" id="PRO_0000302397" description="Glycine cleavage system H protein">
    <location>
        <begin position="1"/>
        <end position="134"/>
    </location>
</feature>
<feature type="domain" description="Lipoyl-binding" evidence="2">
    <location>
        <begin position="24"/>
        <end position="106"/>
    </location>
</feature>
<feature type="modified residue" description="N6-lipoyllysine" evidence="1">
    <location>
        <position position="65"/>
    </location>
</feature>
<gene>
    <name evidence="1" type="primary">gcvH</name>
    <name type="ordered locus">MRA_1838</name>
</gene>
<proteinExistence type="inferred from homology"/>
<keyword id="KW-0450">Lipoyl</keyword>
<keyword id="KW-1185">Reference proteome</keyword>
<evidence type="ECO:0000255" key="1">
    <source>
        <dbReference type="HAMAP-Rule" id="MF_00272"/>
    </source>
</evidence>
<evidence type="ECO:0000255" key="2">
    <source>
        <dbReference type="PROSITE-ProRule" id="PRU01066"/>
    </source>
</evidence>
<dbReference type="EMBL" id="CP000611">
    <property type="protein sequence ID" value="ABQ73593.1"/>
    <property type="molecule type" value="Genomic_DNA"/>
</dbReference>
<dbReference type="RefSeq" id="WP_003899040.1">
    <property type="nucleotide sequence ID" value="NZ_CP016972.1"/>
</dbReference>
<dbReference type="SMR" id="A5U3J3"/>
<dbReference type="KEGG" id="mra:MRA_1838"/>
<dbReference type="eggNOG" id="COG0509">
    <property type="taxonomic scope" value="Bacteria"/>
</dbReference>
<dbReference type="HOGENOM" id="CLU_097408_2_2_11"/>
<dbReference type="Proteomes" id="UP000001988">
    <property type="component" value="Chromosome"/>
</dbReference>
<dbReference type="GO" id="GO:0005829">
    <property type="term" value="C:cytosol"/>
    <property type="evidence" value="ECO:0007669"/>
    <property type="project" value="TreeGrafter"/>
</dbReference>
<dbReference type="GO" id="GO:0005960">
    <property type="term" value="C:glycine cleavage complex"/>
    <property type="evidence" value="ECO:0007669"/>
    <property type="project" value="InterPro"/>
</dbReference>
<dbReference type="GO" id="GO:0019464">
    <property type="term" value="P:glycine decarboxylation via glycine cleavage system"/>
    <property type="evidence" value="ECO:0007669"/>
    <property type="project" value="UniProtKB-UniRule"/>
</dbReference>
<dbReference type="CDD" id="cd06848">
    <property type="entry name" value="GCS_H"/>
    <property type="match status" value="1"/>
</dbReference>
<dbReference type="Gene3D" id="2.40.50.100">
    <property type="match status" value="1"/>
</dbReference>
<dbReference type="HAMAP" id="MF_00272">
    <property type="entry name" value="GcvH"/>
    <property type="match status" value="1"/>
</dbReference>
<dbReference type="InterPro" id="IPR003016">
    <property type="entry name" value="2-oxoA_DH_lipoyl-BS"/>
</dbReference>
<dbReference type="InterPro" id="IPR000089">
    <property type="entry name" value="Biotin_lipoyl"/>
</dbReference>
<dbReference type="InterPro" id="IPR002930">
    <property type="entry name" value="GCV_H"/>
</dbReference>
<dbReference type="InterPro" id="IPR033753">
    <property type="entry name" value="GCV_H/Fam206"/>
</dbReference>
<dbReference type="InterPro" id="IPR017453">
    <property type="entry name" value="GCV_H_sub"/>
</dbReference>
<dbReference type="InterPro" id="IPR011053">
    <property type="entry name" value="Single_hybrid_motif"/>
</dbReference>
<dbReference type="NCBIfam" id="TIGR00527">
    <property type="entry name" value="gcvH"/>
    <property type="match status" value="1"/>
</dbReference>
<dbReference type="NCBIfam" id="NF002270">
    <property type="entry name" value="PRK01202.1"/>
    <property type="match status" value="1"/>
</dbReference>
<dbReference type="PANTHER" id="PTHR11715">
    <property type="entry name" value="GLYCINE CLEAVAGE SYSTEM H PROTEIN"/>
    <property type="match status" value="1"/>
</dbReference>
<dbReference type="PANTHER" id="PTHR11715:SF3">
    <property type="entry name" value="GLYCINE CLEAVAGE SYSTEM H PROTEIN-RELATED"/>
    <property type="match status" value="1"/>
</dbReference>
<dbReference type="Pfam" id="PF01597">
    <property type="entry name" value="GCV_H"/>
    <property type="match status" value="1"/>
</dbReference>
<dbReference type="SUPFAM" id="SSF51230">
    <property type="entry name" value="Single hybrid motif"/>
    <property type="match status" value="1"/>
</dbReference>
<dbReference type="PROSITE" id="PS50968">
    <property type="entry name" value="BIOTINYL_LIPOYL"/>
    <property type="match status" value="1"/>
</dbReference>
<dbReference type="PROSITE" id="PS00189">
    <property type="entry name" value="LIPOYL"/>
    <property type="match status" value="1"/>
</dbReference>
<accession>A5U3J3</accession>